<reference key="1">
    <citation type="journal article" date="1997" name="DNA Res.">
        <title>Construction of a contiguous 874-kb sequence of the Escherichia coli-K12 genome corresponding to 50.0-68.8 min on the linkage map and analysis of its sequence features.</title>
        <authorList>
            <person name="Yamamoto Y."/>
            <person name="Aiba H."/>
            <person name="Baba T."/>
            <person name="Hayashi K."/>
            <person name="Inada T."/>
            <person name="Isono K."/>
            <person name="Itoh T."/>
            <person name="Kimura S."/>
            <person name="Kitagawa M."/>
            <person name="Makino K."/>
            <person name="Miki T."/>
            <person name="Mitsuhashi N."/>
            <person name="Mizobuchi K."/>
            <person name="Mori H."/>
            <person name="Nakade S."/>
            <person name="Nakamura Y."/>
            <person name="Nashimoto H."/>
            <person name="Oshima T."/>
            <person name="Oyama S."/>
            <person name="Saito N."/>
            <person name="Sampei G."/>
            <person name="Satoh Y."/>
            <person name="Sivasundaram S."/>
            <person name="Tagami H."/>
            <person name="Takahashi H."/>
            <person name="Takeda J."/>
            <person name="Takemoto K."/>
            <person name="Uehara K."/>
            <person name="Wada C."/>
            <person name="Yamagata S."/>
            <person name="Horiuchi T."/>
        </authorList>
    </citation>
    <scope>NUCLEOTIDE SEQUENCE [LARGE SCALE GENOMIC DNA]</scope>
    <source>
        <strain>K12 / W3110 / ATCC 27325 / DSM 5911</strain>
    </source>
</reference>
<reference key="2">
    <citation type="journal article" date="1997" name="Science">
        <title>The complete genome sequence of Escherichia coli K-12.</title>
        <authorList>
            <person name="Blattner F.R."/>
            <person name="Plunkett G. III"/>
            <person name="Bloch C.A."/>
            <person name="Perna N.T."/>
            <person name="Burland V."/>
            <person name="Riley M."/>
            <person name="Collado-Vides J."/>
            <person name="Glasner J.D."/>
            <person name="Rode C.K."/>
            <person name="Mayhew G.F."/>
            <person name="Gregor J."/>
            <person name="Davis N.W."/>
            <person name="Kirkpatrick H.A."/>
            <person name="Goeden M.A."/>
            <person name="Rose D.J."/>
            <person name="Mau B."/>
            <person name="Shao Y."/>
        </authorList>
    </citation>
    <scope>NUCLEOTIDE SEQUENCE [LARGE SCALE GENOMIC DNA]</scope>
    <source>
        <strain>K12 / MG1655 / ATCC 47076</strain>
    </source>
</reference>
<reference key="3">
    <citation type="journal article" date="2006" name="Mol. Syst. Biol.">
        <title>Highly accurate genome sequences of Escherichia coli K-12 strains MG1655 and W3110.</title>
        <authorList>
            <person name="Hayashi K."/>
            <person name="Morooka N."/>
            <person name="Yamamoto Y."/>
            <person name="Fujita K."/>
            <person name="Isono K."/>
            <person name="Choi S."/>
            <person name="Ohtsubo E."/>
            <person name="Baba T."/>
            <person name="Wanner B.L."/>
            <person name="Mori H."/>
            <person name="Horiuchi T."/>
        </authorList>
    </citation>
    <scope>NUCLEOTIDE SEQUENCE [LARGE SCALE GENOMIC DNA]</scope>
    <source>
        <strain>K12 / W3110 / ATCC 27325 / DSM 5911</strain>
    </source>
</reference>
<reference key="4">
    <citation type="journal article" date="1987" name="Mol. Microbiol.">
        <title>The parD- mutant of Escherichia coli also carries a gyrAam mutation. The complete sequence of gyrA.</title>
        <authorList>
            <person name="Hussain K."/>
            <person name="Elliott E.J."/>
            <person name="Salmond G.P.C."/>
        </authorList>
    </citation>
    <scope>NUCLEOTIDE SEQUENCE [GENOMIC DNA] OF 1-243</scope>
    <source>
        <strain>OV6</strain>
    </source>
</reference>
<name>YFAA_ECOLI</name>
<protein>
    <recommendedName>
        <fullName>Uncharacterized protein YfaA</fullName>
    </recommendedName>
</protein>
<keyword id="KW-1185">Reference proteome</keyword>
<feature type="chain" id="PRO_0000169171" description="Uncharacterized protein YfaA">
    <location>
        <begin position="1"/>
        <end position="562"/>
    </location>
</feature>
<gene>
    <name type="primary">yfaA</name>
    <name type="synonym">pufY</name>
    <name type="ordered locus">b2230</name>
    <name type="ordered locus">JW2224</name>
</gene>
<organism>
    <name type="scientific">Escherichia coli (strain K12)</name>
    <dbReference type="NCBI Taxonomy" id="83333"/>
    <lineage>
        <taxon>Bacteria</taxon>
        <taxon>Pseudomonadati</taxon>
        <taxon>Pseudomonadota</taxon>
        <taxon>Gammaproteobacteria</taxon>
        <taxon>Enterobacterales</taxon>
        <taxon>Enterobacteriaceae</taxon>
        <taxon>Escherichia</taxon>
    </lineage>
</organism>
<sequence>MSGEKKAKGWRFYGLVGFGAIALLSAGVWALQYAGSGPEKTLSPLVVHNNLQIDLNEPDLFLDSDSLSQLPKDLLTIPFLHDVLSEDFVFYYQNHADRLGIEGSIRRIVYEHDLTLKDKLFSSLLDQPAQAALWHDKQGHLSHYMVLIQRSGLSKLLEPLLFAATSDSQLSKTEISSIKINSETVPVYQLRYNGNNALMFATYQDKMLVFSSTDMLFKDDQQDTEATAIAGDLLSGKKRWQASFGLEERTAEKTPVRQRIVVSARWLGFGYQRLMPSFAGVRFEMGNDGWHSFVALNDESASVDASFDFTPVWNSMPAGASFCVAVPYSHGIAEEMLSHISQENDKLNGALDGAAGLCWYEDSKLQTPLFVGQFDGTAEQAQLPGKLFTQNIGAHESKAPEGVLPVSQTQQGEAQIWRREVSSRYGQYPKAQAAQPDQLMSDYFFRVSLAMQNKTLLFSLDDTLVNNALQTLNKTRPAMVDVIPTDGIVPLYINPQGIAKLLRNETLTSLPKNLEPVFYNAAQTLLMPKLDALSQQPRYVMKLAQMEPGAAWQWLPITWQPL</sequence>
<proteinExistence type="predicted"/>
<accession>P17994</accession>
<accession>P76467</accession>
<accession>P76923</accession>
<dbReference type="EMBL" id="U00096">
    <property type="protein sequence ID" value="AAC75290.2"/>
    <property type="molecule type" value="Genomic_DNA"/>
</dbReference>
<dbReference type="EMBL" id="AP009048">
    <property type="protein sequence ID" value="BAA16047.1"/>
    <property type="molecule type" value="Genomic_DNA"/>
</dbReference>
<dbReference type="EMBL" id="Y00544">
    <property type="protein sequence ID" value="CAA68612.1"/>
    <property type="molecule type" value="Genomic_DNA"/>
</dbReference>
<dbReference type="PIR" id="D64993">
    <property type="entry name" value="D64993"/>
</dbReference>
<dbReference type="RefSeq" id="NP_416733.4">
    <property type="nucleotide sequence ID" value="NC_000913.3"/>
</dbReference>
<dbReference type="RefSeq" id="WP_000012305.1">
    <property type="nucleotide sequence ID" value="NZ_STEB01000002.1"/>
</dbReference>
<dbReference type="BioGRID" id="4262131">
    <property type="interactions" value="139"/>
</dbReference>
<dbReference type="FunCoup" id="P17994">
    <property type="interactions" value="54"/>
</dbReference>
<dbReference type="IntAct" id="P17994">
    <property type="interactions" value="6"/>
</dbReference>
<dbReference type="STRING" id="511145.b2230"/>
<dbReference type="PaxDb" id="511145-b2230"/>
<dbReference type="EnsemblBacteria" id="AAC75290">
    <property type="protein sequence ID" value="AAC75290"/>
    <property type="gene ID" value="b2230"/>
</dbReference>
<dbReference type="GeneID" id="946618"/>
<dbReference type="KEGG" id="ecj:JW2224"/>
<dbReference type="KEGG" id="eco:b2230"/>
<dbReference type="KEGG" id="ecoc:C3026_12460"/>
<dbReference type="PATRIC" id="fig|1411691.4.peg.5"/>
<dbReference type="EchoBASE" id="EB1132"/>
<dbReference type="eggNOG" id="COG4685">
    <property type="taxonomic scope" value="Bacteria"/>
</dbReference>
<dbReference type="HOGENOM" id="CLU_522489_0_0_6"/>
<dbReference type="InParanoid" id="P17994"/>
<dbReference type="OMA" id="AMGYQRF"/>
<dbReference type="OrthoDB" id="6978897at2"/>
<dbReference type="BioCyc" id="EcoCyc:EG11142-MONOMER"/>
<dbReference type="PRO" id="PR:P17994"/>
<dbReference type="Proteomes" id="UP000000625">
    <property type="component" value="Chromosome"/>
</dbReference>
<dbReference type="GO" id="GO:0005829">
    <property type="term" value="C:cytosol"/>
    <property type="evidence" value="ECO:0000314"/>
    <property type="project" value="EcoCyc"/>
</dbReference>
<dbReference type="InterPro" id="IPR018671">
    <property type="entry name" value="DUF2138"/>
</dbReference>
<dbReference type="NCBIfam" id="NF008500">
    <property type="entry name" value="PRK11410.1"/>
    <property type="match status" value="1"/>
</dbReference>
<dbReference type="Pfam" id="PF09909">
    <property type="entry name" value="DUF2138"/>
    <property type="match status" value="1"/>
</dbReference>